<accession>Q8S3R1</accession>
<accession>A0A0P0VNQ5</accession>
<accession>Q0DYA0</accession>
<name>MDAR1_ORYSJ</name>
<dbReference type="EC" id="1.6.5.4" evidence="1"/>
<dbReference type="EMBL" id="AF480496">
    <property type="protein sequence ID" value="AAL87167.1"/>
    <property type="molecule type" value="Genomic_DNA"/>
</dbReference>
<dbReference type="EMBL" id="AP005323">
    <property type="protein sequence ID" value="BAD08053.1"/>
    <property type="molecule type" value="Genomic_DNA"/>
</dbReference>
<dbReference type="EMBL" id="AP005844">
    <property type="protein sequence ID" value="BAD08097.1"/>
    <property type="molecule type" value="Genomic_DNA"/>
</dbReference>
<dbReference type="EMBL" id="AP008208">
    <property type="protein sequence ID" value="BAF09788.2"/>
    <property type="status" value="ALT_SEQ"/>
    <property type="molecule type" value="Genomic_DNA"/>
</dbReference>
<dbReference type="EMBL" id="AP014958">
    <property type="protein sequence ID" value="BAS80526.1"/>
    <property type="status" value="ALT_SEQ"/>
    <property type="molecule type" value="Genomic_DNA"/>
</dbReference>
<dbReference type="EMBL" id="CM000149">
    <property type="protein sequence ID" value="EAZ20347.1"/>
    <property type="molecule type" value="Genomic_DNA"/>
</dbReference>
<dbReference type="RefSeq" id="XP_015627039.1">
    <property type="nucleotide sequence ID" value="XM_015771553.1"/>
</dbReference>
<dbReference type="SMR" id="Q8S3R1"/>
<dbReference type="FunCoup" id="Q8S3R1">
    <property type="interactions" value="885"/>
</dbReference>
<dbReference type="STRING" id="39947.Q8S3R1"/>
<dbReference type="PaxDb" id="39947-Q8S3R1"/>
<dbReference type="KEGG" id="dosa:Os02g0707000"/>
<dbReference type="eggNOG" id="KOG1336">
    <property type="taxonomic scope" value="Eukaryota"/>
</dbReference>
<dbReference type="InParanoid" id="Q8S3R1"/>
<dbReference type="OrthoDB" id="432169at2759"/>
<dbReference type="Proteomes" id="UP000000763">
    <property type="component" value="Chromosome 2"/>
</dbReference>
<dbReference type="Proteomes" id="UP000007752">
    <property type="component" value="Chromosome 12"/>
</dbReference>
<dbReference type="Proteomes" id="UP000059680">
    <property type="component" value="Chromosome 2"/>
</dbReference>
<dbReference type="GO" id="GO:0005737">
    <property type="term" value="C:cytoplasm"/>
    <property type="evidence" value="ECO:0000318"/>
    <property type="project" value="GO_Central"/>
</dbReference>
<dbReference type="GO" id="GO:0005778">
    <property type="term" value="C:peroxisomal membrane"/>
    <property type="evidence" value="ECO:0007669"/>
    <property type="project" value="UniProtKB-SubCell"/>
</dbReference>
<dbReference type="GO" id="GO:0016656">
    <property type="term" value="F:monodehydroascorbate reductase (NADH) activity"/>
    <property type="evidence" value="ECO:0007669"/>
    <property type="project" value="UniProtKB-EC"/>
</dbReference>
<dbReference type="GO" id="GO:0016651">
    <property type="term" value="F:oxidoreductase activity, acting on NAD(P)H"/>
    <property type="evidence" value="ECO:0000318"/>
    <property type="project" value="GO_Central"/>
</dbReference>
<dbReference type="Gene3D" id="3.30.390.30">
    <property type="match status" value="1"/>
</dbReference>
<dbReference type="Gene3D" id="3.50.50.60">
    <property type="entry name" value="FAD/NAD(P)-binding domain"/>
    <property type="match status" value="2"/>
</dbReference>
<dbReference type="InterPro" id="IPR050446">
    <property type="entry name" value="FAD-oxidoreductase/Apoptosis"/>
</dbReference>
<dbReference type="InterPro" id="IPR036188">
    <property type="entry name" value="FAD/NAD-bd_sf"/>
</dbReference>
<dbReference type="InterPro" id="IPR023753">
    <property type="entry name" value="FAD/NAD-binding_dom"/>
</dbReference>
<dbReference type="InterPro" id="IPR016156">
    <property type="entry name" value="FAD/NAD-linked_Rdtase_dimer_sf"/>
</dbReference>
<dbReference type="InterPro" id="IPR048618">
    <property type="entry name" value="MDHAR3-like_C"/>
</dbReference>
<dbReference type="PANTHER" id="PTHR43557">
    <property type="entry name" value="APOPTOSIS-INDUCING FACTOR 1"/>
    <property type="match status" value="1"/>
</dbReference>
<dbReference type="PANTHER" id="PTHR43557:SF19">
    <property type="entry name" value="MONODEHYDROASCORBATE REDUCTASE 1, PEROXISOMAL"/>
    <property type="match status" value="1"/>
</dbReference>
<dbReference type="Pfam" id="PF21791">
    <property type="entry name" value="MDHAR3-like_C"/>
    <property type="match status" value="1"/>
</dbReference>
<dbReference type="Pfam" id="PF07992">
    <property type="entry name" value="Pyr_redox_2"/>
    <property type="match status" value="1"/>
</dbReference>
<dbReference type="PRINTS" id="PR00368">
    <property type="entry name" value="FADPNR"/>
</dbReference>
<dbReference type="PRINTS" id="PR00411">
    <property type="entry name" value="PNDRDTASEI"/>
</dbReference>
<dbReference type="SUPFAM" id="SSF51905">
    <property type="entry name" value="FAD/NAD(P)-binding domain"/>
    <property type="match status" value="2"/>
</dbReference>
<dbReference type="SUPFAM" id="SSF55424">
    <property type="entry name" value="FAD/NAD-linked reductases, dimerisation (C-terminal) domain"/>
    <property type="match status" value="1"/>
</dbReference>
<proteinExistence type="evidence at transcript level"/>
<comment type="function">
    <text evidence="1">Catalyzes the conversion of monodehydroascorbate to ascorbate, oxidizing NADH in the process. Ascorbate is a major antioxidant against reactive oxygen species (ROS) and nitric oxide (NO).</text>
</comment>
<comment type="catalytic activity">
    <reaction evidence="1">
        <text>2 monodehydro-L-ascorbate radical + NADH + H(+) = 2 L-ascorbate + NAD(+)</text>
        <dbReference type="Rhea" id="RHEA:14581"/>
        <dbReference type="ChEBI" id="CHEBI:15378"/>
        <dbReference type="ChEBI" id="CHEBI:38290"/>
        <dbReference type="ChEBI" id="CHEBI:57540"/>
        <dbReference type="ChEBI" id="CHEBI:57945"/>
        <dbReference type="ChEBI" id="CHEBI:59513"/>
        <dbReference type="EC" id="1.6.5.4"/>
    </reaction>
</comment>
<comment type="cofactor">
    <cofactor evidence="1">
        <name>FAD</name>
        <dbReference type="ChEBI" id="CHEBI:57692"/>
    </cofactor>
</comment>
<comment type="subcellular location">
    <subcellularLocation>
        <location evidence="5">Peroxisome membrane</location>
        <topology evidence="2">Multi-pass membrane protein</topology>
    </subcellularLocation>
</comment>
<comment type="induction">
    <text evidence="3">Down-regulated during senescence.</text>
</comment>
<comment type="similarity">
    <text evidence="5">Belongs to the FAD-dependent oxidoreductase family.</text>
</comment>
<comment type="sequence caution" evidence="5">
    <conflict type="erroneous gene model prediction">
        <sequence resource="EMBL-CDS" id="BAF09788"/>
    </conflict>
</comment>
<comment type="sequence caution" evidence="5">
    <conflict type="erroneous gene model prediction">
        <sequence resource="EMBL-CDS" id="BAS80526"/>
    </conflict>
</comment>
<protein>
    <recommendedName>
        <fullName evidence="5">Monodehydroascorbate reductase 1, peroxisomal</fullName>
        <shortName evidence="4">OsMDAR1</shortName>
        <shortName evidence="4">OsMDHAR1</shortName>
        <ecNumber evidence="1">1.6.5.4</ecNumber>
    </recommendedName>
</protein>
<evidence type="ECO:0000250" key="1">
    <source>
        <dbReference type="UniProtKB" id="Q652L6"/>
    </source>
</evidence>
<evidence type="ECO:0000255" key="2"/>
<evidence type="ECO:0000269" key="3">
    <source>
    </source>
</evidence>
<evidence type="ECO:0000303" key="4">
    <source>
    </source>
</evidence>
<evidence type="ECO:0000305" key="5"/>
<evidence type="ECO:0000312" key="6">
    <source>
        <dbReference type="EMBL" id="AAL87167.1"/>
    </source>
</evidence>
<evidence type="ECO:0000312" key="7">
    <source>
        <dbReference type="EMBL" id="BAD08053.1"/>
    </source>
</evidence>
<evidence type="ECO:0000312" key="8">
    <source>
        <dbReference type="EMBL" id="BAD08097.1"/>
    </source>
</evidence>
<evidence type="ECO:0000312" key="9">
    <source>
        <dbReference type="EMBL" id="BAS80526.1"/>
    </source>
</evidence>
<evidence type="ECO:0000312" key="10">
    <source>
        <dbReference type="EMBL" id="EAZ20347.1"/>
    </source>
</evidence>
<feature type="chain" id="PRO_0000442019" description="Monodehydroascorbate reductase 1, peroxisomal">
    <location>
        <begin position="1"/>
        <end position="479"/>
    </location>
</feature>
<feature type="topological domain" description="Cytoplasmic" evidence="5">
    <location>
        <begin position="1"/>
        <end position="3"/>
    </location>
</feature>
<feature type="transmembrane region" description="Helical" evidence="2">
    <location>
        <begin position="4"/>
        <end position="24"/>
    </location>
</feature>
<feature type="topological domain" description="Peroxisomal" evidence="5">
    <location>
        <begin position="25"/>
        <end position="445"/>
    </location>
</feature>
<feature type="transmembrane region" description="Helical" evidence="2">
    <location>
        <begin position="446"/>
        <end position="466"/>
    </location>
</feature>
<feature type="topological domain" description="Cytoplasmic" evidence="5">
    <location>
        <begin position="467"/>
        <end position="479"/>
    </location>
</feature>
<feature type="binding site" evidence="1">
    <location>
        <begin position="12"/>
        <end position="15"/>
    </location>
    <ligand>
        <name>FAD</name>
        <dbReference type="ChEBI" id="CHEBI:57692"/>
    </ligand>
</feature>
<feature type="binding site" evidence="1">
    <location>
        <position position="41"/>
    </location>
    <ligand>
        <name>FAD</name>
        <dbReference type="ChEBI" id="CHEBI:57692"/>
    </ligand>
</feature>
<feature type="binding site" evidence="1">
    <location>
        <position position="48"/>
    </location>
    <ligand>
        <name>FAD</name>
        <dbReference type="ChEBI" id="CHEBI:57692"/>
    </ligand>
</feature>
<feature type="binding site" evidence="1">
    <location>
        <position position="53"/>
    </location>
    <ligand>
        <name>FAD</name>
        <dbReference type="ChEBI" id="CHEBI:57692"/>
    </ligand>
</feature>
<feature type="binding site" evidence="1">
    <location>
        <begin position="147"/>
        <end position="148"/>
    </location>
    <ligand>
        <name>FAD</name>
        <dbReference type="ChEBI" id="CHEBI:57692"/>
    </ligand>
</feature>
<feature type="binding site" evidence="1">
    <location>
        <begin position="172"/>
        <end position="178"/>
    </location>
    <ligand>
        <name>NAD(+)</name>
        <dbReference type="ChEBI" id="CHEBI:57540"/>
    </ligand>
</feature>
<feature type="binding site" evidence="1">
    <location>
        <begin position="174"/>
        <end position="178"/>
    </location>
    <ligand>
        <name>NADP(+)</name>
        <dbReference type="ChEBI" id="CHEBI:58349"/>
    </ligand>
</feature>
<feature type="binding site" evidence="1">
    <location>
        <position position="202"/>
    </location>
    <ligand>
        <name>NAD(+)</name>
        <dbReference type="ChEBI" id="CHEBI:57540"/>
    </ligand>
</feature>
<feature type="binding site" evidence="1">
    <location>
        <position position="202"/>
    </location>
    <ligand>
        <name>NADP(+)</name>
        <dbReference type="ChEBI" id="CHEBI:58349"/>
    </ligand>
</feature>
<feature type="binding site" evidence="1">
    <location>
        <position position="260"/>
    </location>
    <ligand>
        <name>NAD(+)</name>
        <dbReference type="ChEBI" id="CHEBI:57540"/>
    </ligand>
</feature>
<feature type="binding site" evidence="1">
    <location>
        <position position="260"/>
    </location>
    <ligand>
        <name>NADP(+)</name>
        <dbReference type="ChEBI" id="CHEBI:58349"/>
    </ligand>
</feature>
<feature type="binding site" evidence="1">
    <location>
        <position position="297"/>
    </location>
    <ligand>
        <name>FAD</name>
        <dbReference type="ChEBI" id="CHEBI:57692"/>
    </ligand>
</feature>
<feature type="binding site" evidence="1">
    <location>
        <begin position="314"/>
        <end position="315"/>
    </location>
    <ligand>
        <name>NAD(+)</name>
        <dbReference type="ChEBI" id="CHEBI:57540"/>
    </ligand>
</feature>
<feature type="binding site" evidence="1">
    <location>
        <begin position="314"/>
        <end position="315"/>
    </location>
    <ligand>
        <name>NADP(+)</name>
        <dbReference type="ChEBI" id="CHEBI:58349"/>
    </ligand>
</feature>
<feature type="binding site" evidence="1">
    <location>
        <position position="316"/>
    </location>
    <ligand>
        <name>FAD</name>
        <dbReference type="ChEBI" id="CHEBI:57692"/>
    </ligand>
</feature>
<feature type="binding site" evidence="1">
    <location>
        <position position="320"/>
    </location>
    <ligand>
        <name>L-ascorbate</name>
        <dbReference type="ChEBI" id="CHEBI:38290"/>
    </ligand>
</feature>
<feature type="binding site" evidence="1">
    <location>
        <position position="347"/>
    </location>
    <ligand>
        <name>FAD</name>
        <dbReference type="ChEBI" id="CHEBI:57692"/>
    </ligand>
</feature>
<feature type="binding site" evidence="1">
    <location>
        <position position="347"/>
    </location>
    <ligand>
        <name>NAD(+)</name>
        <dbReference type="ChEBI" id="CHEBI:57540"/>
    </ligand>
</feature>
<feature type="binding site" evidence="1">
    <location>
        <position position="347"/>
    </location>
    <ligand>
        <name>NADP(+)</name>
        <dbReference type="ChEBI" id="CHEBI:58349"/>
    </ligand>
</feature>
<feature type="binding site" evidence="1">
    <location>
        <position position="349"/>
    </location>
    <ligand>
        <name>L-ascorbate</name>
        <dbReference type="ChEBI" id="CHEBI:38290"/>
    </ligand>
</feature>
<keyword id="KW-0274">FAD</keyword>
<keyword id="KW-0285">Flavoprotein</keyword>
<keyword id="KW-0472">Membrane</keyword>
<keyword id="KW-0520">NAD</keyword>
<keyword id="KW-0521">NADP</keyword>
<keyword id="KW-0560">Oxidoreductase</keyword>
<keyword id="KW-0576">Peroxisome</keyword>
<keyword id="KW-0676">Redox-active center</keyword>
<keyword id="KW-1185">Reference proteome</keyword>
<keyword id="KW-0812">Transmembrane</keyword>
<keyword id="KW-1133">Transmembrane helix</keyword>
<organism>
    <name type="scientific">Oryza sativa subsp. japonica</name>
    <name type="common">Rice</name>
    <dbReference type="NCBI Taxonomy" id="39947"/>
    <lineage>
        <taxon>Eukaryota</taxon>
        <taxon>Viridiplantae</taxon>
        <taxon>Streptophyta</taxon>
        <taxon>Embryophyta</taxon>
        <taxon>Tracheophyta</taxon>
        <taxon>Spermatophyta</taxon>
        <taxon>Magnoliopsida</taxon>
        <taxon>Liliopsida</taxon>
        <taxon>Poales</taxon>
        <taxon>Poaceae</taxon>
        <taxon>BOP clade</taxon>
        <taxon>Oryzoideae</taxon>
        <taxon>Oryzeae</taxon>
        <taxon>Oryzinae</taxon>
        <taxon>Oryza</taxon>
        <taxon>Oryza sativa</taxon>
    </lineage>
</organism>
<sequence>MGRAFEYVILGGGVAAGYAALEFVRRNGGASSQELCIISDEHFAPYERPALSKGYLLPQDAPRLPAFHTCVGSKDELLTEEWYNEHGIVLVLGTRVISADVRQKTLLTSSGETISYKTLIVATGARAVKLEEFGVSGSDARNVCYLRNVEDADKLVGVMRSCPGGNAVVVGGGYIGMECAAALVTNNIKVTMVFPKKHCMGRLFTPKIAEFYESYYASRGVTFVKEAAVTSMQISAGKVTAVNLGNGRRLPADMVVVGVGARANTGLFDGQLVMENGGIKVNGRMQASDASVYAVGDVAAFPVKLFGGDVRRLEHVDCARRTARHAVAAMLEGTGSVGHIDYLPFFYSRVFSLSWQFYGDNAGEAVHFGDLAPPGDGDGAAPKFGAYWVRDGRVAGAFLEGGSRQEYEAVAAAVRRGAAVADVAELERRGLAFATQATGGGGKPTCAWHATVGVAAAVSIAAFACWYGWQAPYVLKRDF</sequence>
<reference key="1">
    <citation type="journal article" date="2004" name="Mol. Cells">
        <title>Further evidence of microcolinearity between barley and rice genomes at two orthologous regions.</title>
        <authorList>
            <person name="Park Y.-J."/>
            <person name="Dixit A."/>
            <person name="Yoo J.-W."/>
            <person name="Bennetzen J."/>
        </authorList>
    </citation>
    <scope>NUCLEOTIDE SEQUENCE [GENOMIC DNA]</scope>
    <source>
        <strain>cv. Nipponbare</strain>
    </source>
</reference>
<reference key="2">
    <citation type="journal article" date="2005" name="Nature">
        <title>The map-based sequence of the rice genome.</title>
        <authorList>
            <consortium name="International rice genome sequencing project (IRGSP)"/>
        </authorList>
    </citation>
    <scope>NUCLEOTIDE SEQUENCE [LARGE SCALE GENOMIC DNA]</scope>
    <source>
        <strain>cv. Nipponbare</strain>
    </source>
</reference>
<reference key="3">
    <citation type="journal article" date="2008" name="Nucleic Acids Res.">
        <title>The rice annotation project database (RAP-DB): 2008 update.</title>
        <authorList>
            <consortium name="The rice annotation project (RAP)"/>
        </authorList>
    </citation>
    <scope>GENOME REANNOTATION</scope>
    <source>
        <strain>cv. Nipponbare</strain>
    </source>
</reference>
<reference key="4">
    <citation type="journal article" date="2013" name="Rice">
        <title>Improvement of the Oryza sativa Nipponbare reference genome using next generation sequence and optical map data.</title>
        <authorList>
            <person name="Kawahara Y."/>
            <person name="de la Bastide M."/>
            <person name="Hamilton J.P."/>
            <person name="Kanamori H."/>
            <person name="McCombie W.R."/>
            <person name="Ouyang S."/>
            <person name="Schwartz D.C."/>
            <person name="Tanaka T."/>
            <person name="Wu J."/>
            <person name="Zhou S."/>
            <person name="Childs K.L."/>
            <person name="Davidson R.M."/>
            <person name="Lin H."/>
            <person name="Quesada-Ocampo L."/>
            <person name="Vaillancourt B."/>
            <person name="Sakai H."/>
            <person name="Lee S.S."/>
            <person name="Kim J."/>
            <person name="Numa H."/>
            <person name="Itoh T."/>
            <person name="Buell C.R."/>
            <person name="Matsumoto T."/>
        </authorList>
    </citation>
    <scope>GENOME REANNOTATION</scope>
    <source>
        <strain>cv. Nipponbare</strain>
    </source>
</reference>
<reference key="5">
    <citation type="journal article" date="2005" name="PLoS Biol.">
        <title>The genomes of Oryza sativa: a history of duplications.</title>
        <authorList>
            <person name="Yu J."/>
            <person name="Wang J."/>
            <person name="Lin W."/>
            <person name="Li S."/>
            <person name="Li H."/>
            <person name="Zhou J."/>
            <person name="Ni P."/>
            <person name="Dong W."/>
            <person name="Hu S."/>
            <person name="Zeng C."/>
            <person name="Zhang J."/>
            <person name="Zhang Y."/>
            <person name="Li R."/>
            <person name="Xu Z."/>
            <person name="Li S."/>
            <person name="Li X."/>
            <person name="Zheng H."/>
            <person name="Cong L."/>
            <person name="Lin L."/>
            <person name="Yin J."/>
            <person name="Geng J."/>
            <person name="Li G."/>
            <person name="Shi J."/>
            <person name="Liu J."/>
            <person name="Lv H."/>
            <person name="Li J."/>
            <person name="Wang J."/>
            <person name="Deng Y."/>
            <person name="Ran L."/>
            <person name="Shi X."/>
            <person name="Wang X."/>
            <person name="Wu Q."/>
            <person name="Li C."/>
            <person name="Ren X."/>
            <person name="Wang J."/>
            <person name="Wang X."/>
            <person name="Li D."/>
            <person name="Liu D."/>
            <person name="Zhang X."/>
            <person name="Ji Z."/>
            <person name="Zhao W."/>
            <person name="Sun Y."/>
            <person name="Zhang Z."/>
            <person name="Bao J."/>
            <person name="Han Y."/>
            <person name="Dong L."/>
            <person name="Ji J."/>
            <person name="Chen P."/>
            <person name="Wu S."/>
            <person name="Liu J."/>
            <person name="Xiao Y."/>
            <person name="Bu D."/>
            <person name="Tan J."/>
            <person name="Yang L."/>
            <person name="Ye C."/>
            <person name="Zhang J."/>
            <person name="Xu J."/>
            <person name="Zhou Y."/>
            <person name="Yu Y."/>
            <person name="Zhang B."/>
            <person name="Zhuang S."/>
            <person name="Wei H."/>
            <person name="Liu B."/>
            <person name="Lei M."/>
            <person name="Yu H."/>
            <person name="Li Y."/>
            <person name="Xu H."/>
            <person name="Wei S."/>
            <person name="He X."/>
            <person name="Fang L."/>
            <person name="Zhang Z."/>
            <person name="Zhang Y."/>
            <person name="Huang X."/>
            <person name="Su Z."/>
            <person name="Tong W."/>
            <person name="Li J."/>
            <person name="Tong Z."/>
            <person name="Li S."/>
            <person name="Ye J."/>
            <person name="Wang L."/>
            <person name="Fang L."/>
            <person name="Lei T."/>
            <person name="Chen C.-S."/>
            <person name="Chen H.-C."/>
            <person name="Xu Z."/>
            <person name="Li H."/>
            <person name="Huang H."/>
            <person name="Zhang F."/>
            <person name="Xu H."/>
            <person name="Li N."/>
            <person name="Zhao C."/>
            <person name="Li S."/>
            <person name="Dong L."/>
            <person name="Huang Y."/>
            <person name="Li L."/>
            <person name="Xi Y."/>
            <person name="Qi Q."/>
            <person name="Li W."/>
            <person name="Zhang B."/>
            <person name="Hu W."/>
            <person name="Zhang Y."/>
            <person name="Tian X."/>
            <person name="Jiao Y."/>
            <person name="Liang X."/>
            <person name="Jin J."/>
            <person name="Gao L."/>
            <person name="Zheng W."/>
            <person name="Hao B."/>
            <person name="Liu S.-M."/>
            <person name="Wang W."/>
            <person name="Yuan L."/>
            <person name="Cao M."/>
            <person name="McDermott J."/>
            <person name="Samudrala R."/>
            <person name="Wang J."/>
            <person name="Wong G.K.-S."/>
            <person name="Yang H."/>
        </authorList>
    </citation>
    <scope>NUCLEOTIDE SEQUENCE [LARGE SCALE GENOMIC DNA]</scope>
    <source>
        <strain>cv. Nipponbare</strain>
    </source>
</reference>
<reference key="6">
    <citation type="journal article" date="2015" name="J. Plant Physiol.">
        <title>Transcriptional profile of genes involved in ascorbate glutathione cycle in senescing leaves for an early senescence leaf (esl) rice mutant.</title>
        <authorList>
            <person name="Li Z."/>
            <person name="Su D."/>
            <person name="Lei B."/>
            <person name="Wang F."/>
            <person name="Geng W."/>
            <person name="Pan G."/>
            <person name="Cheng F."/>
        </authorList>
    </citation>
    <scope>INDUCTION</scope>
</reference>
<gene>
    <name evidence="4" type="primary">MDAR1</name>
    <name evidence="4" type="synonym">MDHAR1</name>
    <name evidence="9" type="ordered locus">Os02g0707000</name>
    <name evidence="5" type="ordered locus">LOC_Os02g47790</name>
    <name evidence="6" type="ORF">49D11.20b</name>
    <name evidence="10" type="ORF">OsJ_35955</name>
    <name evidence="8" type="ORF">OSJNBb0060O16.12</name>
    <name evidence="7" type="ORF">P0680A05.38</name>
</gene>